<proteinExistence type="inferred from homology"/>
<accession>A4XBI6</accession>
<sequence length="154" mass="16669">MTDIIATEVAPEAAEALAPVVRAPLGDRPIQTVGRRKEAIVRVRIVPGTGKITCNGRDLEAYFPSKVHQQLIKDPLVTTEKAEEFDVIANLRGGGTTGQAGALRLAIARALIASEPDDRPALKKAGFLTRDARAKESKKYGLKKARKAPQYSKR</sequence>
<comment type="similarity">
    <text evidence="1">Belongs to the universal ribosomal protein uS9 family.</text>
</comment>
<feature type="chain" id="PRO_1000081832" description="Small ribosomal subunit protein uS9">
    <location>
        <begin position="1"/>
        <end position="154"/>
    </location>
</feature>
<feature type="region of interest" description="Disordered" evidence="2">
    <location>
        <begin position="133"/>
        <end position="154"/>
    </location>
</feature>
<feature type="compositionally biased region" description="Basic residues" evidence="2">
    <location>
        <begin position="140"/>
        <end position="154"/>
    </location>
</feature>
<evidence type="ECO:0000255" key="1">
    <source>
        <dbReference type="HAMAP-Rule" id="MF_00532"/>
    </source>
</evidence>
<evidence type="ECO:0000256" key="2">
    <source>
        <dbReference type="SAM" id="MobiDB-lite"/>
    </source>
</evidence>
<evidence type="ECO:0000305" key="3"/>
<keyword id="KW-1185">Reference proteome</keyword>
<keyword id="KW-0687">Ribonucleoprotein</keyword>
<keyword id="KW-0689">Ribosomal protein</keyword>
<organism>
    <name type="scientific">Salinispora tropica (strain ATCC BAA-916 / DSM 44818 / JCM 13857 / NBRC 105044 / CNB-440)</name>
    <dbReference type="NCBI Taxonomy" id="369723"/>
    <lineage>
        <taxon>Bacteria</taxon>
        <taxon>Bacillati</taxon>
        <taxon>Actinomycetota</taxon>
        <taxon>Actinomycetes</taxon>
        <taxon>Micromonosporales</taxon>
        <taxon>Micromonosporaceae</taxon>
        <taxon>Salinispora</taxon>
    </lineage>
</organism>
<dbReference type="EMBL" id="CP000667">
    <property type="protein sequence ID" value="ABP56293.1"/>
    <property type="molecule type" value="Genomic_DNA"/>
</dbReference>
<dbReference type="RefSeq" id="WP_012015068.1">
    <property type="nucleotide sequence ID" value="NC_009380.1"/>
</dbReference>
<dbReference type="SMR" id="A4XBI6"/>
<dbReference type="STRING" id="369723.Strop_3863"/>
<dbReference type="KEGG" id="stp:Strop_3863"/>
<dbReference type="PATRIC" id="fig|369723.5.peg.3987"/>
<dbReference type="eggNOG" id="COG0103">
    <property type="taxonomic scope" value="Bacteria"/>
</dbReference>
<dbReference type="HOGENOM" id="CLU_046483_2_0_11"/>
<dbReference type="Proteomes" id="UP000000235">
    <property type="component" value="Chromosome"/>
</dbReference>
<dbReference type="GO" id="GO:0005737">
    <property type="term" value="C:cytoplasm"/>
    <property type="evidence" value="ECO:0007669"/>
    <property type="project" value="UniProtKB-ARBA"/>
</dbReference>
<dbReference type="GO" id="GO:0015935">
    <property type="term" value="C:small ribosomal subunit"/>
    <property type="evidence" value="ECO:0007669"/>
    <property type="project" value="TreeGrafter"/>
</dbReference>
<dbReference type="GO" id="GO:0003723">
    <property type="term" value="F:RNA binding"/>
    <property type="evidence" value="ECO:0007669"/>
    <property type="project" value="TreeGrafter"/>
</dbReference>
<dbReference type="GO" id="GO:0003735">
    <property type="term" value="F:structural constituent of ribosome"/>
    <property type="evidence" value="ECO:0007669"/>
    <property type="project" value="InterPro"/>
</dbReference>
<dbReference type="GO" id="GO:0006412">
    <property type="term" value="P:translation"/>
    <property type="evidence" value="ECO:0007669"/>
    <property type="project" value="UniProtKB-UniRule"/>
</dbReference>
<dbReference type="FunFam" id="3.30.230.10:FF:000001">
    <property type="entry name" value="30S ribosomal protein S9"/>
    <property type="match status" value="1"/>
</dbReference>
<dbReference type="Gene3D" id="3.30.230.10">
    <property type="match status" value="1"/>
</dbReference>
<dbReference type="HAMAP" id="MF_00532_B">
    <property type="entry name" value="Ribosomal_uS9_B"/>
    <property type="match status" value="1"/>
</dbReference>
<dbReference type="InterPro" id="IPR020568">
    <property type="entry name" value="Ribosomal_Su5_D2-typ_SF"/>
</dbReference>
<dbReference type="InterPro" id="IPR000754">
    <property type="entry name" value="Ribosomal_uS9"/>
</dbReference>
<dbReference type="InterPro" id="IPR023035">
    <property type="entry name" value="Ribosomal_uS9_bac/plastid"/>
</dbReference>
<dbReference type="InterPro" id="IPR020574">
    <property type="entry name" value="Ribosomal_uS9_CS"/>
</dbReference>
<dbReference type="InterPro" id="IPR014721">
    <property type="entry name" value="Ribsml_uS5_D2-typ_fold_subgr"/>
</dbReference>
<dbReference type="NCBIfam" id="NF001099">
    <property type="entry name" value="PRK00132.1"/>
    <property type="match status" value="1"/>
</dbReference>
<dbReference type="PANTHER" id="PTHR21569">
    <property type="entry name" value="RIBOSOMAL PROTEIN S9"/>
    <property type="match status" value="1"/>
</dbReference>
<dbReference type="PANTHER" id="PTHR21569:SF1">
    <property type="entry name" value="SMALL RIBOSOMAL SUBUNIT PROTEIN US9M"/>
    <property type="match status" value="1"/>
</dbReference>
<dbReference type="Pfam" id="PF00380">
    <property type="entry name" value="Ribosomal_S9"/>
    <property type="match status" value="1"/>
</dbReference>
<dbReference type="SUPFAM" id="SSF54211">
    <property type="entry name" value="Ribosomal protein S5 domain 2-like"/>
    <property type="match status" value="1"/>
</dbReference>
<dbReference type="PROSITE" id="PS00360">
    <property type="entry name" value="RIBOSOMAL_S9"/>
    <property type="match status" value="1"/>
</dbReference>
<name>RS9_SALTO</name>
<reference key="1">
    <citation type="journal article" date="2007" name="Proc. Natl. Acad. Sci. U.S.A.">
        <title>Genome sequencing reveals complex secondary metabolome in the marine actinomycete Salinispora tropica.</title>
        <authorList>
            <person name="Udwary D.W."/>
            <person name="Zeigler L."/>
            <person name="Asolkar R.N."/>
            <person name="Singan V."/>
            <person name="Lapidus A."/>
            <person name="Fenical W."/>
            <person name="Jensen P.R."/>
            <person name="Moore B.S."/>
        </authorList>
    </citation>
    <scope>NUCLEOTIDE SEQUENCE [LARGE SCALE GENOMIC DNA]</scope>
    <source>
        <strain>ATCC BAA-916 / DSM 44818 / JCM 13857 / NBRC 105044 / CNB-440</strain>
    </source>
</reference>
<protein>
    <recommendedName>
        <fullName evidence="1">Small ribosomal subunit protein uS9</fullName>
    </recommendedName>
    <alternativeName>
        <fullName evidence="3">30S ribosomal protein S9</fullName>
    </alternativeName>
</protein>
<gene>
    <name evidence="1" type="primary">rpsI</name>
    <name type="ordered locus">Strop_3863</name>
</gene>